<name>T96_TERAN</name>
<comment type="subcellular location">
    <subcellularLocation>
        <location evidence="4">Secreted</location>
    </subcellularLocation>
</comment>
<comment type="tissue specificity">
    <text evidence="4">Expressed by the venom duct.</text>
</comment>
<comment type="domain">
    <text>The cysteine framework is IX (C-C-C-C-C-C).</text>
</comment>
<comment type="PTM">
    <text evidence="3">Contains 3 disulfide bonds.</text>
</comment>
<keyword id="KW-1015">Disulfide bond</keyword>
<keyword id="KW-0964">Secreted</keyword>
<keyword id="KW-0732">Signal</keyword>
<keyword id="KW-0800">Toxin</keyword>
<feature type="signal peptide" evidence="1">
    <location>
        <begin position="1"/>
        <end position="21"/>
    </location>
</feature>
<feature type="propeptide" id="PRO_0000435080" evidence="3">
    <location>
        <begin position="22"/>
        <end position="52"/>
    </location>
</feature>
<feature type="chain" id="PRO_0000435081" description="Teretoxin Tan9.6">
    <location>
        <begin position="53"/>
        <end position="85"/>
    </location>
</feature>
<proteinExistence type="inferred from homology"/>
<protein>
    <recommendedName>
        <fullName evidence="2">Teretoxin Tan9.6</fullName>
    </recommendedName>
</protein>
<evidence type="ECO:0000255" key="1"/>
<evidence type="ECO:0000303" key="2">
    <source>
    </source>
</evidence>
<evidence type="ECO:0000305" key="3"/>
<evidence type="ECO:0000305" key="4">
    <source>
    </source>
</evidence>
<reference key="1">
    <citation type="journal article" date="2015" name="Genome Biol. Evol.">
        <title>Molecular diversity and gene evolution of the venom arsenal of Terebridae predatory marine snails.</title>
        <authorList>
            <person name="Gorson J."/>
            <person name="Ramrattan G."/>
            <person name="Verdes A."/>
            <person name="Wright E.M."/>
            <person name="Kantor Y."/>
            <person name="Rajaram Srinivasan R."/>
            <person name="Musunuri R."/>
            <person name="Packer D."/>
            <person name="Albano G."/>
            <person name="Qiu W.G."/>
            <person name="Holford M."/>
        </authorList>
    </citation>
    <scope>NUCLEOTIDE SEQUENCE [MRNA]</scope>
    <source>
        <tissue>Venom duct</tissue>
    </source>
</reference>
<organism>
    <name type="scientific">Terebra anilis</name>
    <name type="common">Auger snail</name>
    <name type="synonym">Cinguloterebra anilis</name>
    <dbReference type="NCBI Taxonomy" id="553697"/>
    <lineage>
        <taxon>Eukaryota</taxon>
        <taxon>Metazoa</taxon>
        <taxon>Spiralia</taxon>
        <taxon>Lophotrochozoa</taxon>
        <taxon>Mollusca</taxon>
        <taxon>Gastropoda</taxon>
        <taxon>Caenogastropoda</taxon>
        <taxon>Neogastropoda</taxon>
        <taxon>Conoidea</taxon>
        <taxon>Terebridae</taxon>
        <taxon>Terebra</taxon>
    </lineage>
</organism>
<accession>P0DN57</accession>
<sequence>MMSKTGALLLTFMILVLFSMAAADALGERFEDHEQKIREQDAGVGLLSLMGRAVIECSKCDTDCKTQKGCIPVAKTTNNPTYCIC</sequence>
<dbReference type="GO" id="GO:0005576">
    <property type="term" value="C:extracellular region"/>
    <property type="evidence" value="ECO:0007669"/>
    <property type="project" value="UniProtKB-SubCell"/>
</dbReference>
<dbReference type="GO" id="GO:0090729">
    <property type="term" value="F:toxin activity"/>
    <property type="evidence" value="ECO:0007669"/>
    <property type="project" value="UniProtKB-KW"/>
</dbReference>